<protein>
    <recommendedName>
        <fullName>Serine/arginine-rich splicing factor 8</fullName>
    </recommendedName>
    <alternativeName>
        <fullName>Pre-mRNA-splicing factor SRP46</fullName>
        <shortName>Splicing factor SRp46</shortName>
    </alternativeName>
    <alternativeName>
        <fullName>Splicing factor, arginine/serine-rich 2B</fullName>
    </alternativeName>
</protein>
<comment type="function">
    <text evidence="3">Involved in pre-mRNA alternative splicing.</text>
</comment>
<comment type="interaction">
    <interactant intactId="EBI-6380719">
        <id>Q9BRL6</id>
    </interactant>
    <interactant intactId="EBI-539478">
        <id>Q96SB4</id>
        <label>SRPK1</label>
    </interactant>
    <organismsDiffer>false</organismsDiffer>
    <experiments>2</experiments>
</comment>
<comment type="interaction">
    <interactant intactId="EBI-6380719">
        <id>Q9BRL6</id>
    </interactant>
    <interactant intactId="EBI-593303">
        <id>P78362</id>
        <label>SRPK2</label>
    </interactant>
    <organismsDiffer>false</organismsDiffer>
    <experiments>3</experiments>
</comment>
<comment type="interaction">
    <interactant intactId="EBI-10976394">
        <id>Q9BRL6-2</id>
    </interactant>
    <interactant intactId="EBI-745579">
        <id>P49761</id>
        <label>CLK3</label>
    </interactant>
    <organismsDiffer>false</organismsDiffer>
    <experiments>3</experiments>
</comment>
<comment type="interaction">
    <interactant intactId="EBI-10976394">
        <id>Q9BRL6-2</id>
    </interactant>
    <interactant intactId="EBI-10176379">
        <id>P59991</id>
        <label>KRTAP12-2</label>
    </interactant>
    <organismsDiffer>false</organismsDiffer>
    <experiments>3</experiments>
</comment>
<comment type="interaction">
    <interactant intactId="EBI-10976394">
        <id>Q9BRL6-2</id>
    </interactant>
    <interactant intactId="EBI-593303">
        <id>P78362</id>
        <label>SRPK2</label>
    </interactant>
    <organismsDiffer>false</organismsDiffer>
    <experiments>3</experiments>
</comment>
<comment type="interaction">
    <interactant intactId="EBI-10976394">
        <id>Q9BRL6-2</id>
    </interactant>
    <interactant intactId="EBI-372557">
        <id>P84103</id>
        <label>SRSF3</label>
    </interactant>
    <organismsDiffer>false</organismsDiffer>
    <experiments>3</experiments>
</comment>
<comment type="interaction">
    <interactant intactId="EBI-10976394">
        <id>Q9BRL6-2</id>
    </interactant>
    <interactant intactId="EBI-725485">
        <id>P62995</id>
        <label>TRA2B</label>
    </interactant>
    <organismsDiffer>false</organismsDiffer>
    <experiments>3</experiments>
</comment>
<comment type="subcellular location">
    <subcellularLocation>
        <location evidence="3">Nucleus</location>
    </subcellularLocation>
</comment>
<comment type="alternative products">
    <event type="alternative splicing"/>
    <isoform>
        <id>Q9BRL6-1</id>
        <name>1</name>
        <sequence type="displayed"/>
    </isoform>
    <isoform>
        <id>Q9BRL6-2</id>
        <name>2</name>
        <sequence type="described" ref="VSP_028026"/>
    </isoform>
</comment>
<comment type="tissue specificity">
    <text evidence="3">Strongly expressed in pancreas, spleen and prostate. Weakly expressed in lung, liver and thymus.</text>
</comment>
<comment type="similarity">
    <text evidence="5">Belongs to the splicing factor SR family.</text>
</comment>
<name>SRSF8_HUMAN</name>
<sequence length="282" mass="32288">MSCGRPPPDVDGMITLKVDNLTYRTSPDSLRRVFEKYGRVGDVYIPREPHTKAPRGFAFVRFHDRRDAQDAEAAMDGAELDGRELRVQVARYGRRDLPRSRQGEPRGRSRGGGYGRRSRSYGRRSRSPRRRHRSRSRGPSCSRSRSRSRYRGSRYSRSPYSRSPYSRSRYSRSPYSRSRYRESRYGGSHYSSSGYSNSRYSRYHSSRSHSKSGSSTSSRSASTSKSSSARRSKSSSVSRSRSRSRSSSMTRSPPRVSKRKSKSRSRSKRPPKSPEEEGQMSS</sequence>
<reference key="1">
    <citation type="journal article" date="1998" name="Mol. Cell. Biol.">
        <title>Characterization of SRp46, a novel human SR splicing factor encoded by a PR264/SC35 retropseudogene.</title>
        <authorList>
            <person name="Soret J."/>
            <person name="Gattoni R."/>
            <person name="Guyon C."/>
            <person name="Sureau A."/>
            <person name="Popielarz M."/>
            <person name="Le Rouzic E."/>
            <person name="Dumon S."/>
            <person name="Apiou F."/>
            <person name="Dutrillaux B."/>
            <person name="Voss H."/>
            <person name="Ansorge W."/>
            <person name="Stevenin J."/>
            <person name="Perbal B."/>
        </authorList>
    </citation>
    <scope>NUCLEOTIDE SEQUENCE [GENOMIC DNA / MRNA] (ISOFORM 1)</scope>
    <scope>FUNCTION</scope>
    <scope>PHOSPHORYLATION</scope>
    <scope>SUBCELLULAR LOCATION</scope>
    <scope>TISSUE SPECIFICITY</scope>
    <source>
        <tissue>Placenta</tissue>
        <tissue>Thymus</tissue>
    </source>
</reference>
<reference key="2">
    <citation type="journal article" date="2004" name="Nat. Genet.">
        <title>Complete sequencing and characterization of 21,243 full-length human cDNAs.</title>
        <authorList>
            <person name="Ota T."/>
            <person name="Suzuki Y."/>
            <person name="Nishikawa T."/>
            <person name="Otsuki T."/>
            <person name="Sugiyama T."/>
            <person name="Irie R."/>
            <person name="Wakamatsu A."/>
            <person name="Hayashi K."/>
            <person name="Sato H."/>
            <person name="Nagai K."/>
            <person name="Kimura K."/>
            <person name="Makita H."/>
            <person name="Sekine M."/>
            <person name="Obayashi M."/>
            <person name="Nishi T."/>
            <person name="Shibahara T."/>
            <person name="Tanaka T."/>
            <person name="Ishii S."/>
            <person name="Yamamoto J."/>
            <person name="Saito K."/>
            <person name="Kawai Y."/>
            <person name="Isono Y."/>
            <person name="Nakamura Y."/>
            <person name="Nagahari K."/>
            <person name="Murakami K."/>
            <person name="Yasuda T."/>
            <person name="Iwayanagi T."/>
            <person name="Wagatsuma M."/>
            <person name="Shiratori A."/>
            <person name="Sudo H."/>
            <person name="Hosoiri T."/>
            <person name="Kaku Y."/>
            <person name="Kodaira H."/>
            <person name="Kondo H."/>
            <person name="Sugawara M."/>
            <person name="Takahashi M."/>
            <person name="Kanda K."/>
            <person name="Yokoi T."/>
            <person name="Furuya T."/>
            <person name="Kikkawa E."/>
            <person name="Omura Y."/>
            <person name="Abe K."/>
            <person name="Kamihara K."/>
            <person name="Katsuta N."/>
            <person name="Sato K."/>
            <person name="Tanikawa M."/>
            <person name="Yamazaki M."/>
            <person name="Ninomiya K."/>
            <person name="Ishibashi T."/>
            <person name="Yamashita H."/>
            <person name="Murakawa K."/>
            <person name="Fujimori K."/>
            <person name="Tanai H."/>
            <person name="Kimata M."/>
            <person name="Watanabe M."/>
            <person name="Hiraoka S."/>
            <person name="Chiba Y."/>
            <person name="Ishida S."/>
            <person name="Ono Y."/>
            <person name="Takiguchi S."/>
            <person name="Watanabe S."/>
            <person name="Yosida M."/>
            <person name="Hotuta T."/>
            <person name="Kusano J."/>
            <person name="Kanehori K."/>
            <person name="Takahashi-Fujii A."/>
            <person name="Hara H."/>
            <person name="Tanase T.-O."/>
            <person name="Nomura Y."/>
            <person name="Togiya S."/>
            <person name="Komai F."/>
            <person name="Hara R."/>
            <person name="Takeuchi K."/>
            <person name="Arita M."/>
            <person name="Imose N."/>
            <person name="Musashino K."/>
            <person name="Yuuki H."/>
            <person name="Oshima A."/>
            <person name="Sasaki N."/>
            <person name="Aotsuka S."/>
            <person name="Yoshikawa Y."/>
            <person name="Matsunawa H."/>
            <person name="Ichihara T."/>
            <person name="Shiohata N."/>
            <person name="Sano S."/>
            <person name="Moriya S."/>
            <person name="Momiyama H."/>
            <person name="Satoh N."/>
            <person name="Takami S."/>
            <person name="Terashima Y."/>
            <person name="Suzuki O."/>
            <person name="Nakagawa S."/>
            <person name="Senoh A."/>
            <person name="Mizoguchi H."/>
            <person name="Goto Y."/>
            <person name="Shimizu F."/>
            <person name="Wakebe H."/>
            <person name="Hishigaki H."/>
            <person name="Watanabe T."/>
            <person name="Sugiyama A."/>
            <person name="Takemoto M."/>
            <person name="Kawakami B."/>
            <person name="Yamazaki M."/>
            <person name="Watanabe K."/>
            <person name="Kumagai A."/>
            <person name="Itakura S."/>
            <person name="Fukuzumi Y."/>
            <person name="Fujimori Y."/>
            <person name="Komiyama M."/>
            <person name="Tashiro H."/>
            <person name="Tanigami A."/>
            <person name="Fujiwara T."/>
            <person name="Ono T."/>
            <person name="Yamada K."/>
            <person name="Fujii Y."/>
            <person name="Ozaki K."/>
            <person name="Hirao M."/>
            <person name="Ohmori Y."/>
            <person name="Kawabata A."/>
            <person name="Hikiji T."/>
            <person name="Kobatake N."/>
            <person name="Inagaki H."/>
            <person name="Ikema Y."/>
            <person name="Okamoto S."/>
            <person name="Okitani R."/>
            <person name="Kawakami T."/>
            <person name="Noguchi S."/>
            <person name="Itoh T."/>
            <person name="Shigeta K."/>
            <person name="Senba T."/>
            <person name="Matsumura K."/>
            <person name="Nakajima Y."/>
            <person name="Mizuno T."/>
            <person name="Morinaga M."/>
            <person name="Sasaki M."/>
            <person name="Togashi T."/>
            <person name="Oyama M."/>
            <person name="Hata H."/>
            <person name="Watanabe M."/>
            <person name="Komatsu T."/>
            <person name="Mizushima-Sugano J."/>
            <person name="Satoh T."/>
            <person name="Shirai Y."/>
            <person name="Takahashi Y."/>
            <person name="Nakagawa K."/>
            <person name="Okumura K."/>
            <person name="Nagase T."/>
            <person name="Nomura N."/>
            <person name="Kikuchi H."/>
            <person name="Masuho Y."/>
            <person name="Yamashita R."/>
            <person name="Nakai K."/>
            <person name="Yada T."/>
            <person name="Nakamura Y."/>
            <person name="Ohara O."/>
            <person name="Isogai T."/>
            <person name="Sugano S."/>
        </authorList>
    </citation>
    <scope>NUCLEOTIDE SEQUENCE [LARGE SCALE MRNA] (ISOFORM 1)</scope>
    <source>
        <tissue>Ovary</tissue>
        <tissue>Thalamus</tissue>
    </source>
</reference>
<reference key="3">
    <citation type="submission" date="2005-07" db="EMBL/GenBank/DDBJ databases">
        <authorList>
            <person name="Mural R.J."/>
            <person name="Istrail S."/>
            <person name="Sutton G.G."/>
            <person name="Florea L."/>
            <person name="Halpern A.L."/>
            <person name="Mobarry C.M."/>
            <person name="Lippert R."/>
            <person name="Walenz B."/>
            <person name="Shatkay H."/>
            <person name="Dew I."/>
            <person name="Miller J.R."/>
            <person name="Flanigan M.J."/>
            <person name="Edwards N.J."/>
            <person name="Bolanos R."/>
            <person name="Fasulo D."/>
            <person name="Halldorsson B.V."/>
            <person name="Hannenhalli S."/>
            <person name="Turner R."/>
            <person name="Yooseph S."/>
            <person name="Lu F."/>
            <person name="Nusskern D.R."/>
            <person name="Shue B.C."/>
            <person name="Zheng X.H."/>
            <person name="Zhong F."/>
            <person name="Delcher A.L."/>
            <person name="Huson D.H."/>
            <person name="Kravitz S.A."/>
            <person name="Mouchard L."/>
            <person name="Reinert K."/>
            <person name="Remington K.A."/>
            <person name="Clark A.G."/>
            <person name="Waterman M.S."/>
            <person name="Eichler E.E."/>
            <person name="Adams M.D."/>
            <person name="Hunkapiller M.W."/>
            <person name="Myers E.W."/>
            <person name="Venter J.C."/>
        </authorList>
    </citation>
    <scope>NUCLEOTIDE SEQUENCE [LARGE SCALE GENOMIC DNA]</scope>
</reference>
<reference key="4">
    <citation type="journal article" date="2004" name="Genome Res.">
        <title>The status, quality, and expansion of the NIH full-length cDNA project: the Mammalian Gene Collection (MGC).</title>
        <authorList>
            <consortium name="The MGC Project Team"/>
        </authorList>
    </citation>
    <scope>NUCLEOTIDE SEQUENCE [LARGE SCALE MRNA] (ISOFORM 2)</scope>
    <source>
        <tissue>Brain</tissue>
    </source>
</reference>
<reference key="5">
    <citation type="journal article" date="2006" name="Cell">
        <title>Global, in vivo, and site-specific phosphorylation dynamics in signaling networks.</title>
        <authorList>
            <person name="Olsen J.V."/>
            <person name="Blagoev B."/>
            <person name="Gnad F."/>
            <person name="Macek B."/>
            <person name="Kumar C."/>
            <person name="Mortensen P."/>
            <person name="Mann M."/>
        </authorList>
    </citation>
    <scope>IDENTIFICATION BY MASS SPECTROMETRY [LARGE SCALE ANALYSIS]</scope>
    <source>
        <tissue>Cervix carcinoma</tissue>
    </source>
</reference>
<reference key="6">
    <citation type="journal article" date="2008" name="Proc. Natl. Acad. Sci. U.S.A.">
        <title>A quantitative atlas of mitotic phosphorylation.</title>
        <authorList>
            <person name="Dephoure N."/>
            <person name="Zhou C."/>
            <person name="Villen J."/>
            <person name="Beausoleil S.A."/>
            <person name="Bakalarski C.E."/>
            <person name="Elledge S.J."/>
            <person name="Gygi S.P."/>
        </authorList>
    </citation>
    <scope>PHOSPHORYLATION [LARGE SCALE ANALYSIS] AT SER-273</scope>
    <scope>IDENTIFICATION BY MASS SPECTROMETRY [LARGE SCALE ANALYSIS]</scope>
    <source>
        <tissue>Cervix carcinoma</tissue>
    </source>
</reference>
<reference key="7">
    <citation type="journal article" date="2009" name="Anal. Chem.">
        <title>Lys-N and trypsin cover complementary parts of the phosphoproteome in a refined SCX-based approach.</title>
        <authorList>
            <person name="Gauci S."/>
            <person name="Helbig A.O."/>
            <person name="Slijper M."/>
            <person name="Krijgsveld J."/>
            <person name="Heck A.J."/>
            <person name="Mohammed S."/>
        </authorList>
    </citation>
    <scope>ACETYLATION [LARGE SCALE ANALYSIS] AT SER-2</scope>
    <scope>CLEAVAGE OF INITIATOR METHIONINE [LARGE SCALE ANALYSIS]</scope>
    <scope>IDENTIFICATION BY MASS SPECTROMETRY [LARGE SCALE ANALYSIS]</scope>
</reference>
<reference key="8">
    <citation type="journal article" date="2010" name="Sci. Signal.">
        <title>Quantitative phosphoproteomics reveals widespread full phosphorylation site occupancy during mitosis.</title>
        <authorList>
            <person name="Olsen J.V."/>
            <person name="Vermeulen M."/>
            <person name="Santamaria A."/>
            <person name="Kumar C."/>
            <person name="Miller M.L."/>
            <person name="Jensen L.J."/>
            <person name="Gnad F."/>
            <person name="Cox J."/>
            <person name="Jensen T.S."/>
            <person name="Nigg E.A."/>
            <person name="Brunak S."/>
            <person name="Mann M."/>
        </authorList>
    </citation>
    <scope>PHOSPHORYLATION [LARGE SCALE ANALYSIS] AT SER-196</scope>
    <scope>IDENTIFICATION BY MASS SPECTROMETRY [LARGE SCALE ANALYSIS]</scope>
    <source>
        <tissue>Cervix carcinoma</tissue>
    </source>
</reference>
<reference key="9">
    <citation type="journal article" date="2013" name="J. Proteome Res.">
        <title>Toward a comprehensive characterization of a human cancer cell phosphoproteome.</title>
        <authorList>
            <person name="Zhou H."/>
            <person name="Di Palma S."/>
            <person name="Preisinger C."/>
            <person name="Peng M."/>
            <person name="Polat A.N."/>
            <person name="Heck A.J."/>
            <person name="Mohammed S."/>
        </authorList>
    </citation>
    <scope>PHOSPHORYLATION [LARGE SCALE ANALYSIS] AT SER-2; SER-26; SER-156; SER-158; SER-171; SER-173 AND SER-196</scope>
    <scope>IDENTIFICATION BY MASS SPECTROMETRY [LARGE SCALE ANALYSIS]</scope>
    <source>
        <tissue>Cervix carcinoma</tissue>
        <tissue>Erythroleukemia</tissue>
    </source>
</reference>
<reference key="10">
    <citation type="submission" date="2006-10" db="PDB data bank">
        <title>Solution structure of RNA-binding domain in SRP46 splicing factor.</title>
        <authorList>
            <consortium name="RIKEN structural genomics initiative (RSGI)"/>
        </authorList>
    </citation>
    <scope>STRUCTURE BY NMR OF 8-97</scope>
</reference>
<organism>
    <name type="scientific">Homo sapiens</name>
    <name type="common">Human</name>
    <dbReference type="NCBI Taxonomy" id="9606"/>
    <lineage>
        <taxon>Eukaryota</taxon>
        <taxon>Metazoa</taxon>
        <taxon>Chordata</taxon>
        <taxon>Craniata</taxon>
        <taxon>Vertebrata</taxon>
        <taxon>Euteleostomi</taxon>
        <taxon>Mammalia</taxon>
        <taxon>Eutheria</taxon>
        <taxon>Euarchontoglires</taxon>
        <taxon>Primates</taxon>
        <taxon>Haplorrhini</taxon>
        <taxon>Catarrhini</taxon>
        <taxon>Hominidae</taxon>
        <taxon>Homo</taxon>
    </lineage>
</organism>
<keyword id="KW-0002">3D-structure</keyword>
<keyword id="KW-0007">Acetylation</keyword>
<keyword id="KW-0025">Alternative splicing</keyword>
<keyword id="KW-0507">mRNA processing</keyword>
<keyword id="KW-0508">mRNA splicing</keyword>
<keyword id="KW-0539">Nucleus</keyword>
<keyword id="KW-0597">Phosphoprotein</keyword>
<keyword id="KW-1267">Proteomics identification</keyword>
<keyword id="KW-1185">Reference proteome</keyword>
<keyword id="KW-0694">RNA-binding</keyword>
<proteinExistence type="evidence at protein level"/>
<gene>
    <name type="primary">SRSF8</name>
    <name type="synonym">SFRS2B</name>
    <name type="synonym">SRP46</name>
</gene>
<dbReference type="EMBL" id="AF031165">
    <property type="protein sequence ID" value="AAK54350.1"/>
    <property type="molecule type" value="Genomic_DNA"/>
</dbReference>
<dbReference type="EMBL" id="AF031166">
    <property type="protein sequence ID" value="AAK54351.1"/>
    <property type="molecule type" value="mRNA"/>
</dbReference>
<dbReference type="EMBL" id="AK023379">
    <property type="protein sequence ID" value="BAG51186.1"/>
    <property type="molecule type" value="mRNA"/>
</dbReference>
<dbReference type="EMBL" id="AK312514">
    <property type="protein sequence ID" value="BAG35415.1"/>
    <property type="molecule type" value="mRNA"/>
</dbReference>
<dbReference type="EMBL" id="CH471065">
    <property type="protein sequence ID" value="EAW66954.1"/>
    <property type="molecule type" value="Genomic_DNA"/>
</dbReference>
<dbReference type="EMBL" id="BC057783">
    <property type="protein sequence ID" value="AAH57783.1"/>
    <property type="molecule type" value="mRNA"/>
</dbReference>
<dbReference type="CCDS" id="CCDS73370.1">
    <molecule id="Q9BRL6-1"/>
</dbReference>
<dbReference type="RefSeq" id="NP_115285.1">
    <molecule id="Q9BRL6-1"/>
    <property type="nucleotide sequence ID" value="NM_032102.4"/>
</dbReference>
<dbReference type="RefSeq" id="XP_016872631.1">
    <property type="nucleotide sequence ID" value="XM_017017142.1"/>
</dbReference>
<dbReference type="PDB" id="2DNM">
    <property type="method" value="NMR"/>
    <property type="chains" value="A=8-97"/>
</dbReference>
<dbReference type="PDBsum" id="2DNM"/>
<dbReference type="SMR" id="Q9BRL6"/>
<dbReference type="BioGRID" id="116132">
    <property type="interactions" value="192"/>
</dbReference>
<dbReference type="CORUM" id="Q9BRL6"/>
<dbReference type="FunCoup" id="Q9BRL6">
    <property type="interactions" value="753"/>
</dbReference>
<dbReference type="IntAct" id="Q9BRL6">
    <property type="interactions" value="63"/>
</dbReference>
<dbReference type="STRING" id="9606.ENSP00000480140"/>
<dbReference type="GlyGen" id="Q9BRL6">
    <property type="glycosylation" value="1 site, 1 O-linked glycan (1 site)"/>
</dbReference>
<dbReference type="iPTMnet" id="Q9BRL6"/>
<dbReference type="PhosphoSitePlus" id="Q9BRL6"/>
<dbReference type="BioMuta" id="SRSF8"/>
<dbReference type="DMDM" id="74761217"/>
<dbReference type="jPOST" id="Q9BRL6"/>
<dbReference type="MassIVE" id="Q9BRL6"/>
<dbReference type="PaxDb" id="9606-ENSP00000480140"/>
<dbReference type="PeptideAtlas" id="Q9BRL6"/>
<dbReference type="ProteomicsDB" id="78785">
    <molecule id="Q9BRL6-1"/>
</dbReference>
<dbReference type="ProteomicsDB" id="78786">
    <molecule id="Q9BRL6-2"/>
</dbReference>
<dbReference type="Pumba" id="Q9BRL6"/>
<dbReference type="Antibodypedia" id="73322">
    <property type="antibodies" value="125 antibodies from 20 providers"/>
</dbReference>
<dbReference type="DNASU" id="10929"/>
<dbReference type="Ensembl" id="ENST00000587424.3">
    <molecule id="Q9BRL6-1"/>
    <property type="protein sequence ID" value="ENSP00000480140.1"/>
    <property type="gene ID" value="ENSG00000263465.5"/>
</dbReference>
<dbReference type="GeneID" id="10929"/>
<dbReference type="KEGG" id="hsa:10929"/>
<dbReference type="MANE-Select" id="ENST00000587424.3">
    <property type="protein sequence ID" value="ENSP00000480140.1"/>
    <property type="RefSeq nucleotide sequence ID" value="NM_032102.4"/>
    <property type="RefSeq protein sequence ID" value="NP_115285.1"/>
</dbReference>
<dbReference type="UCSC" id="uc031ybj.2">
    <molecule id="Q9BRL6-1"/>
    <property type="organism name" value="human"/>
</dbReference>
<dbReference type="AGR" id="HGNC:16988"/>
<dbReference type="CTD" id="10929"/>
<dbReference type="DisGeNET" id="10929"/>
<dbReference type="GeneCards" id="SRSF8"/>
<dbReference type="HGNC" id="HGNC:16988">
    <property type="gene designation" value="SRSF8"/>
</dbReference>
<dbReference type="HPA" id="ENSG00000263465">
    <property type="expression patterns" value="Low tissue specificity"/>
</dbReference>
<dbReference type="MIM" id="603269">
    <property type="type" value="gene"/>
</dbReference>
<dbReference type="neXtProt" id="NX_Q9BRL6"/>
<dbReference type="OpenTargets" id="ENSG00000263465"/>
<dbReference type="PharmGKB" id="PA165543687"/>
<dbReference type="VEuPathDB" id="HostDB:ENSG00000263465"/>
<dbReference type="eggNOG" id="KOG4207">
    <property type="taxonomic scope" value="Eukaryota"/>
</dbReference>
<dbReference type="GeneTree" id="ENSGT00940000154883"/>
<dbReference type="HOGENOM" id="CLU_012062_10_3_1"/>
<dbReference type="InParanoid" id="Q9BRL6"/>
<dbReference type="OMA" id="RFHDQRD"/>
<dbReference type="OrthoDB" id="8093034at2759"/>
<dbReference type="PAN-GO" id="Q9BRL6">
    <property type="GO annotations" value="4 GO annotations based on evolutionary models"/>
</dbReference>
<dbReference type="PathwayCommons" id="Q9BRL6"/>
<dbReference type="Reactome" id="R-HSA-72163">
    <property type="pathway name" value="mRNA Splicing - Major Pathway"/>
</dbReference>
<dbReference type="Reactome" id="R-HSA-72203">
    <property type="pathway name" value="Processing of Capped Intron-Containing Pre-mRNA"/>
</dbReference>
<dbReference type="SignaLink" id="Q9BRL6"/>
<dbReference type="BioGRID-ORCS" id="10929">
    <property type="hits" value="12 hits in 214 CRISPR screens"/>
</dbReference>
<dbReference type="CD-CODE" id="91857CE7">
    <property type="entry name" value="Nucleolus"/>
</dbReference>
<dbReference type="ChiTaRS" id="SRSF8">
    <property type="organism name" value="human"/>
</dbReference>
<dbReference type="EvolutionaryTrace" id="Q9BRL6"/>
<dbReference type="GenomeRNAi" id="10929"/>
<dbReference type="Pharos" id="Q9BRL6">
    <property type="development level" value="Tbio"/>
</dbReference>
<dbReference type="PRO" id="PR:Q9BRL6"/>
<dbReference type="Proteomes" id="UP000005640">
    <property type="component" value="Chromosome 11"/>
</dbReference>
<dbReference type="RNAct" id="Q9BRL6">
    <property type="molecule type" value="protein"/>
</dbReference>
<dbReference type="Bgee" id="ENSG00000263465">
    <property type="expression patterns" value="Expressed in tendon of biceps brachii and 221 other cell types or tissues"/>
</dbReference>
<dbReference type="ExpressionAtlas" id="Q9BRL6">
    <property type="expression patterns" value="baseline and differential"/>
</dbReference>
<dbReference type="GO" id="GO:0005829">
    <property type="term" value="C:cytosol"/>
    <property type="evidence" value="ECO:0000314"/>
    <property type="project" value="HPA"/>
</dbReference>
<dbReference type="GO" id="GO:0016607">
    <property type="term" value="C:nuclear speck"/>
    <property type="evidence" value="ECO:0000314"/>
    <property type="project" value="HPA"/>
</dbReference>
<dbReference type="GO" id="GO:0005654">
    <property type="term" value="C:nucleoplasm"/>
    <property type="evidence" value="ECO:0000314"/>
    <property type="project" value="HPA"/>
</dbReference>
<dbReference type="GO" id="GO:0003723">
    <property type="term" value="F:RNA binding"/>
    <property type="evidence" value="ECO:0007005"/>
    <property type="project" value="UniProtKB"/>
</dbReference>
<dbReference type="GO" id="GO:0006397">
    <property type="term" value="P:mRNA processing"/>
    <property type="evidence" value="ECO:0007669"/>
    <property type="project" value="UniProtKB-KW"/>
</dbReference>
<dbReference type="GO" id="GO:0000381">
    <property type="term" value="P:regulation of alternative mRNA splicing, via spliceosome"/>
    <property type="evidence" value="ECO:0000318"/>
    <property type="project" value="GO_Central"/>
</dbReference>
<dbReference type="GO" id="GO:0008380">
    <property type="term" value="P:RNA splicing"/>
    <property type="evidence" value="ECO:0007669"/>
    <property type="project" value="UniProtKB-KW"/>
</dbReference>
<dbReference type="CDD" id="cd12311">
    <property type="entry name" value="RRM_SRSF2_SRSF8"/>
    <property type="match status" value="1"/>
</dbReference>
<dbReference type="FunFam" id="3.30.70.330:FF:000787">
    <property type="entry name" value="Serine/arginine-rich splicing factor 8"/>
    <property type="match status" value="1"/>
</dbReference>
<dbReference type="Gene3D" id="3.30.70.330">
    <property type="match status" value="1"/>
</dbReference>
<dbReference type="InterPro" id="IPR012677">
    <property type="entry name" value="Nucleotide-bd_a/b_plait_sf"/>
</dbReference>
<dbReference type="InterPro" id="IPR035979">
    <property type="entry name" value="RBD_domain_sf"/>
</dbReference>
<dbReference type="InterPro" id="IPR050441">
    <property type="entry name" value="RBM"/>
</dbReference>
<dbReference type="InterPro" id="IPR000504">
    <property type="entry name" value="RRM_dom"/>
</dbReference>
<dbReference type="PANTHER" id="PTHR48034">
    <property type="entry name" value="TRANSFORMER-2 SEX-DETERMINING PROTEIN-RELATED"/>
    <property type="match status" value="1"/>
</dbReference>
<dbReference type="Pfam" id="PF00076">
    <property type="entry name" value="RRM_1"/>
    <property type="match status" value="1"/>
</dbReference>
<dbReference type="SMART" id="SM00360">
    <property type="entry name" value="RRM"/>
    <property type="match status" value="1"/>
</dbReference>
<dbReference type="SUPFAM" id="SSF54928">
    <property type="entry name" value="RNA-binding domain, RBD"/>
    <property type="match status" value="1"/>
</dbReference>
<dbReference type="PROSITE" id="PS50102">
    <property type="entry name" value="RRM"/>
    <property type="match status" value="1"/>
</dbReference>
<accession>Q9BRL6</accession>
<accession>B2R6B8</accession>
<accession>Q6PF01</accession>
<accession>Q96TA3</accession>
<feature type="initiator methionine" description="Removed" evidence="7">
    <location>
        <position position="1"/>
    </location>
</feature>
<feature type="chain" id="PRO_0000304412" description="Serine/arginine-rich splicing factor 8">
    <location>
        <begin position="2"/>
        <end position="282"/>
    </location>
</feature>
<feature type="domain" description="RRM" evidence="1">
    <location>
        <begin position="14"/>
        <end position="92"/>
    </location>
</feature>
<feature type="region of interest" description="Disordered" evidence="2">
    <location>
        <begin position="91"/>
        <end position="282"/>
    </location>
</feature>
<feature type="compositionally biased region" description="Basic and acidic residues" evidence="2">
    <location>
        <begin position="93"/>
        <end position="107"/>
    </location>
</feature>
<feature type="compositionally biased region" description="Basic residues" evidence="2">
    <location>
        <begin position="116"/>
        <end position="136"/>
    </location>
</feature>
<feature type="compositionally biased region" description="Basic residues" evidence="2">
    <location>
        <begin position="144"/>
        <end position="154"/>
    </location>
</feature>
<feature type="compositionally biased region" description="Low complexity" evidence="2">
    <location>
        <begin position="155"/>
        <end position="177"/>
    </location>
</feature>
<feature type="compositionally biased region" description="Low complexity" evidence="2">
    <location>
        <begin position="185"/>
        <end position="200"/>
    </location>
</feature>
<feature type="compositionally biased region" description="Basic residues" evidence="2">
    <location>
        <begin position="201"/>
        <end position="210"/>
    </location>
</feature>
<feature type="compositionally biased region" description="Low complexity" evidence="2">
    <location>
        <begin position="211"/>
        <end position="227"/>
    </location>
</feature>
<feature type="compositionally biased region" description="Low complexity" evidence="2">
    <location>
        <begin position="234"/>
        <end position="255"/>
    </location>
</feature>
<feature type="compositionally biased region" description="Basic residues" evidence="2">
    <location>
        <begin position="256"/>
        <end position="271"/>
    </location>
</feature>
<feature type="modified residue" description="N-acetylserine" evidence="7">
    <location>
        <position position="2"/>
    </location>
</feature>
<feature type="modified residue" description="Phosphoserine" evidence="9">
    <location>
        <position position="2"/>
    </location>
</feature>
<feature type="modified residue" description="Phosphoserine" evidence="9">
    <location>
        <position position="26"/>
    </location>
</feature>
<feature type="modified residue" description="Phosphoserine" evidence="9">
    <location>
        <position position="156"/>
    </location>
</feature>
<feature type="modified residue" description="Phosphoserine" evidence="9">
    <location>
        <position position="158"/>
    </location>
</feature>
<feature type="modified residue" description="Phosphoserine" evidence="9">
    <location>
        <position position="171"/>
    </location>
</feature>
<feature type="modified residue" description="Phosphoserine" evidence="9">
    <location>
        <position position="173"/>
    </location>
</feature>
<feature type="modified residue" description="Phosphoserine" evidence="8 9">
    <location>
        <position position="196"/>
    </location>
</feature>
<feature type="modified residue" description="Phosphoserine" evidence="6">
    <location>
        <position position="273"/>
    </location>
</feature>
<feature type="splice variant" id="VSP_028026" description="In isoform 2." evidence="4">
    <location>
        <begin position="114"/>
        <end position="120"/>
    </location>
</feature>
<feature type="sequence conflict" description="In Ref. 4; AAH57783." evidence="5" ref="4">
    <original>S</original>
    <variation>G</variation>
    <location>
        <position position="156"/>
    </location>
</feature>
<feature type="strand" evidence="10">
    <location>
        <begin position="15"/>
        <end position="20"/>
    </location>
</feature>
<feature type="helix" evidence="10">
    <location>
        <begin position="27"/>
        <end position="34"/>
    </location>
</feature>
<feature type="turn" evidence="10">
    <location>
        <begin position="35"/>
        <end position="37"/>
    </location>
</feature>
<feature type="strand" evidence="10">
    <location>
        <begin position="40"/>
        <end position="44"/>
    </location>
</feature>
<feature type="strand" evidence="10">
    <location>
        <begin position="49"/>
        <end position="51"/>
    </location>
</feature>
<feature type="strand" evidence="10">
    <location>
        <begin position="58"/>
        <end position="66"/>
    </location>
</feature>
<feature type="helix" evidence="10">
    <location>
        <begin position="67"/>
        <end position="75"/>
    </location>
</feature>
<feature type="strand" evidence="10">
    <location>
        <begin position="86"/>
        <end position="89"/>
    </location>
</feature>
<evidence type="ECO:0000255" key="1">
    <source>
        <dbReference type="PROSITE-ProRule" id="PRU00176"/>
    </source>
</evidence>
<evidence type="ECO:0000256" key="2">
    <source>
        <dbReference type="SAM" id="MobiDB-lite"/>
    </source>
</evidence>
<evidence type="ECO:0000269" key="3">
    <source>
    </source>
</evidence>
<evidence type="ECO:0000303" key="4">
    <source>
    </source>
</evidence>
<evidence type="ECO:0000305" key="5"/>
<evidence type="ECO:0007744" key="6">
    <source>
    </source>
</evidence>
<evidence type="ECO:0007744" key="7">
    <source>
    </source>
</evidence>
<evidence type="ECO:0007744" key="8">
    <source>
    </source>
</evidence>
<evidence type="ECO:0007744" key="9">
    <source>
    </source>
</evidence>
<evidence type="ECO:0007829" key="10">
    <source>
        <dbReference type="PDB" id="2DNM"/>
    </source>
</evidence>